<reference key="1">
    <citation type="submission" date="2004-11" db="EMBL/GenBank/DDBJ databases">
        <authorList>
            <consortium name="The German cDNA consortium"/>
        </authorList>
    </citation>
    <scope>NUCLEOTIDE SEQUENCE [LARGE SCALE MRNA]</scope>
    <source>
        <tissue>Brain cortex</tissue>
    </source>
</reference>
<organism>
    <name type="scientific">Pongo abelii</name>
    <name type="common">Sumatran orangutan</name>
    <name type="synonym">Pongo pygmaeus abelii</name>
    <dbReference type="NCBI Taxonomy" id="9601"/>
    <lineage>
        <taxon>Eukaryota</taxon>
        <taxon>Metazoa</taxon>
        <taxon>Chordata</taxon>
        <taxon>Craniata</taxon>
        <taxon>Vertebrata</taxon>
        <taxon>Euteleostomi</taxon>
        <taxon>Mammalia</taxon>
        <taxon>Eutheria</taxon>
        <taxon>Euarchontoglires</taxon>
        <taxon>Primates</taxon>
        <taxon>Haplorrhini</taxon>
        <taxon>Catarrhini</taxon>
        <taxon>Hominidae</taxon>
        <taxon>Pongo</taxon>
    </lineage>
</organism>
<proteinExistence type="evidence at transcript level"/>
<evidence type="ECO:0000250" key="1">
    <source>
        <dbReference type="UniProtKB" id="P05198"/>
    </source>
</evidence>
<evidence type="ECO:0000250" key="2">
    <source>
        <dbReference type="UniProtKB" id="P20042"/>
    </source>
</evidence>
<evidence type="ECO:0000250" key="3">
    <source>
        <dbReference type="UniProtKB" id="P41035"/>
    </source>
</evidence>
<evidence type="ECO:0000250" key="4">
    <source>
        <dbReference type="UniProtKB" id="P56329"/>
    </source>
</evidence>
<evidence type="ECO:0000250" key="5">
    <source>
        <dbReference type="UniProtKB" id="Q99L45"/>
    </source>
</evidence>
<evidence type="ECO:0000255" key="6"/>
<evidence type="ECO:0000256" key="7">
    <source>
        <dbReference type="SAM" id="MobiDB-lite"/>
    </source>
</evidence>
<evidence type="ECO:0000305" key="8"/>
<accession>Q5R4T9</accession>
<gene>
    <name type="primary">EIF2S2</name>
</gene>
<keyword id="KW-0007">Acetylation</keyword>
<keyword id="KW-0963">Cytoplasm</keyword>
<keyword id="KW-0396">Initiation factor</keyword>
<keyword id="KW-1017">Isopeptide bond</keyword>
<keyword id="KW-0479">Metal-binding</keyword>
<keyword id="KW-0597">Phosphoprotein</keyword>
<keyword id="KW-0648">Protein biosynthesis</keyword>
<keyword id="KW-1185">Reference proteome</keyword>
<keyword id="KW-0832">Ubl conjugation</keyword>
<keyword id="KW-0862">Zinc</keyword>
<keyword id="KW-0863">Zinc-finger</keyword>
<sequence>MSGDEMIFDPTMSKKKKKKKKPFMLDEEGDTQTEETQPSETKEVEPEPTEDKDLEADEEDTRKKDASDDLDDLNFFNQKKKKKKTKKIFDIDEAEEGVKDLKIESDVQEPTEPEDDLDIMLGNKKKKKKNVKFPDEDEILEKDEALEDEDNKKDDGISFSNQTGPAWAGSERDYTYEELLNRVFNIMREKNPDMVAGEKRKFVMKPPQVVRVGTKKTSFVNFTDICKLLHRQPKHLLAFLLAELGTSGSIDGNNQLVIKGRFQQKQIENVLRRYIKEYVTCHTCRSPDTILQKDTRLYFLQCETCHSRCSAASIKTGFQAVTGKRAQLRAKAN</sequence>
<dbReference type="EMBL" id="CR861152">
    <property type="protein sequence ID" value="CAH93227.1"/>
    <property type="molecule type" value="mRNA"/>
</dbReference>
<dbReference type="RefSeq" id="NP_001127646.1">
    <property type="nucleotide sequence ID" value="NM_001134174.1"/>
</dbReference>
<dbReference type="SMR" id="Q5R4T9"/>
<dbReference type="STRING" id="9601.ENSPPYP00000012209"/>
<dbReference type="GeneID" id="100174727"/>
<dbReference type="KEGG" id="pon:100174727"/>
<dbReference type="CTD" id="8894"/>
<dbReference type="eggNOG" id="KOG2768">
    <property type="taxonomic scope" value="Eukaryota"/>
</dbReference>
<dbReference type="InParanoid" id="Q5R4T9"/>
<dbReference type="OrthoDB" id="10255414at2759"/>
<dbReference type="Proteomes" id="UP000001595">
    <property type="component" value="Unplaced"/>
</dbReference>
<dbReference type="GO" id="GO:0005829">
    <property type="term" value="C:cytosol"/>
    <property type="evidence" value="ECO:0007669"/>
    <property type="project" value="UniProtKB-SubCell"/>
</dbReference>
<dbReference type="GO" id="GO:0005850">
    <property type="term" value="C:eukaryotic translation initiation factor 2 complex"/>
    <property type="evidence" value="ECO:0000250"/>
    <property type="project" value="UniProtKB"/>
</dbReference>
<dbReference type="GO" id="GO:0003729">
    <property type="term" value="F:mRNA binding"/>
    <property type="evidence" value="ECO:0007669"/>
    <property type="project" value="TreeGrafter"/>
</dbReference>
<dbReference type="GO" id="GO:0003743">
    <property type="term" value="F:translation initiation factor activity"/>
    <property type="evidence" value="ECO:0007669"/>
    <property type="project" value="UniProtKB-KW"/>
</dbReference>
<dbReference type="GO" id="GO:0031369">
    <property type="term" value="F:translation initiation factor binding"/>
    <property type="evidence" value="ECO:0007669"/>
    <property type="project" value="TreeGrafter"/>
</dbReference>
<dbReference type="GO" id="GO:0008270">
    <property type="term" value="F:zinc ion binding"/>
    <property type="evidence" value="ECO:0007669"/>
    <property type="project" value="UniProtKB-KW"/>
</dbReference>
<dbReference type="GO" id="GO:0002183">
    <property type="term" value="P:cytoplasmic translational initiation"/>
    <property type="evidence" value="ECO:0000250"/>
    <property type="project" value="UniProtKB"/>
</dbReference>
<dbReference type="GO" id="GO:0001731">
    <property type="term" value="P:formation of translation preinitiation complex"/>
    <property type="evidence" value="ECO:0007669"/>
    <property type="project" value="TreeGrafter"/>
</dbReference>
<dbReference type="FunFam" id="3.30.30.170:FF:000001">
    <property type="entry name" value="Eukaryotic translation initiation factor 2 subunit"/>
    <property type="match status" value="1"/>
</dbReference>
<dbReference type="Gene3D" id="3.30.30.170">
    <property type="match status" value="1"/>
</dbReference>
<dbReference type="InterPro" id="IPR045196">
    <property type="entry name" value="IF2/IF5"/>
</dbReference>
<dbReference type="InterPro" id="IPR002735">
    <property type="entry name" value="Transl_init_fac_IF2/IF5_dom"/>
</dbReference>
<dbReference type="InterPro" id="IPR016189">
    <property type="entry name" value="Transl_init_fac_IF2/IF5_N"/>
</dbReference>
<dbReference type="InterPro" id="IPR016190">
    <property type="entry name" value="Transl_init_fac_IF2/IF5_Zn-bd"/>
</dbReference>
<dbReference type="PANTHER" id="PTHR23001">
    <property type="entry name" value="EUKARYOTIC TRANSLATION INITIATION FACTOR"/>
    <property type="match status" value="1"/>
</dbReference>
<dbReference type="PANTHER" id="PTHR23001:SF3">
    <property type="entry name" value="EUKARYOTIC TRANSLATION INITIATION FACTOR 2 SUBUNIT 2"/>
    <property type="match status" value="1"/>
</dbReference>
<dbReference type="Pfam" id="PF01873">
    <property type="entry name" value="eIF-5_eIF-2B"/>
    <property type="match status" value="1"/>
</dbReference>
<dbReference type="SMART" id="SM00653">
    <property type="entry name" value="eIF2B_5"/>
    <property type="match status" value="1"/>
</dbReference>
<dbReference type="SUPFAM" id="SSF100966">
    <property type="entry name" value="Translation initiation factor 2 beta, aIF2beta, N-terminal domain"/>
    <property type="match status" value="1"/>
</dbReference>
<dbReference type="SUPFAM" id="SSF75689">
    <property type="entry name" value="Zinc-binding domain of translation initiation factor 2 beta"/>
    <property type="match status" value="1"/>
</dbReference>
<protein>
    <recommendedName>
        <fullName>Eukaryotic translation initiation factor 2 subunit 2</fullName>
    </recommendedName>
    <alternativeName>
        <fullName>Eukaryotic translation initiation factor 2 subunit beta</fullName>
        <shortName>eIF2-beta</shortName>
    </alternativeName>
</protein>
<name>IF2B_PONAB</name>
<comment type="function">
    <text evidence="1">Component of the eIF2 complex that functions in the early steps of protein synthesis by forming a ternary complex with GTP and initiator tRNA. This complex binds to a 40S ribosomal subunit, followed by mRNA binding to form the 43S pre-initiation complex (43S PIC). Junction of the 60S ribosomal subunit to form the 80S initiation complex is preceded by hydrolysis of the GTP bound to eIF2 and release of an eIF2-GDP binary complex. In order for eIF2 to recycle and catalyze another round of initiation, the GDP bound to eIF2 must exchange with GTP by way of a reaction catalyzed by eIF2B.</text>
</comment>
<comment type="subunit">
    <text evidence="2 5">Eukaryotic translation initiation factor 2 eIF2 is a heterotrimeric complex composed of an alpha (EIF2S1), a beta (EIF2S2) and a gamma (EIF2S3) chain (By similarity). eIF2 is member of the 43S pre-initiation complex (43S PIC). eIF2 forms a complex with at least CELF1/CUGBP1, CALR, CALR3, EIF2S1, EIF2S2, HSP90B1 and HSPA5 (By similarity). Interacts with BZW2/5MP1 (By similarity). Interacts with EIF5 (By similarity).</text>
</comment>
<comment type="subcellular location">
    <subcellularLocation>
        <location evidence="4">Cytoplasm</location>
        <location evidence="4">Cytosol</location>
    </subcellularLocation>
</comment>
<comment type="similarity">
    <text evidence="8">Belongs to the eIF-2-beta/eIF-5 family.</text>
</comment>
<feature type="initiator methionine" description="Removed" evidence="2">
    <location>
        <position position="1"/>
    </location>
</feature>
<feature type="chain" id="PRO_0000290340" description="Eukaryotic translation initiation factor 2 subunit 2">
    <location>
        <begin position="2"/>
        <end position="333"/>
    </location>
</feature>
<feature type="zinc finger region" description="C4-type" evidence="6">
    <location>
        <begin position="281"/>
        <end position="305"/>
    </location>
</feature>
<feature type="region of interest" description="Disordered" evidence="7">
    <location>
        <begin position="1"/>
        <end position="119"/>
    </location>
</feature>
<feature type="region of interest" description="Disordered" evidence="7">
    <location>
        <begin position="139"/>
        <end position="164"/>
    </location>
</feature>
<feature type="compositionally biased region" description="Basic residues" evidence="7">
    <location>
        <begin position="13"/>
        <end position="22"/>
    </location>
</feature>
<feature type="compositionally biased region" description="Basic and acidic residues" evidence="7">
    <location>
        <begin position="40"/>
        <end position="51"/>
    </location>
</feature>
<feature type="compositionally biased region" description="Basic and acidic residues" evidence="7">
    <location>
        <begin position="96"/>
        <end position="105"/>
    </location>
</feature>
<feature type="compositionally biased region" description="Acidic residues" evidence="7">
    <location>
        <begin position="106"/>
        <end position="118"/>
    </location>
</feature>
<feature type="compositionally biased region" description="Acidic residues" evidence="7">
    <location>
        <begin position="139"/>
        <end position="149"/>
    </location>
</feature>
<feature type="modified residue" description="N-acetylserine" evidence="2">
    <location>
        <position position="2"/>
    </location>
</feature>
<feature type="modified residue" description="Phosphoserine" evidence="2">
    <location>
        <position position="2"/>
    </location>
</feature>
<feature type="modified residue" description="Phosphoserine" evidence="3">
    <location>
        <position position="13"/>
    </location>
</feature>
<feature type="modified residue" description="Phosphothreonine" evidence="2">
    <location>
        <position position="31"/>
    </location>
</feature>
<feature type="modified residue" description="Phosphothreonine" evidence="2">
    <location>
        <position position="36"/>
    </location>
</feature>
<feature type="modified residue" description="Phosphoserine" evidence="3">
    <location>
        <position position="67"/>
    </location>
</feature>
<feature type="modified residue" description="Phosphoserine" evidence="2">
    <location>
        <position position="105"/>
    </location>
</feature>
<feature type="modified residue" description="Phosphothreonine" evidence="2">
    <location>
        <position position="111"/>
    </location>
</feature>
<feature type="modified residue" description="Phosphoserine" evidence="2">
    <location>
        <position position="158"/>
    </location>
</feature>
<feature type="modified residue" description="Phosphoserine" evidence="3">
    <location>
        <position position="218"/>
    </location>
</feature>
<feature type="modified residue" description="N6-acetyllysine" evidence="2">
    <location>
        <position position="265"/>
    </location>
</feature>
<feature type="modified residue" description="N6-acetyllysine" evidence="2">
    <location>
        <position position="293"/>
    </location>
</feature>
<feature type="cross-link" description="Glycyl lysine isopeptide (Lys-Gly) (interchain with G-Cter in SUMO2)" evidence="2">
    <location>
        <position position="102"/>
    </location>
</feature>